<geneLocation type="chloroplast"/>
<dbReference type="EC" id="2.7.7.6" evidence="1"/>
<dbReference type="EMBL" id="AY958086">
    <property type="protein sequence ID" value="AAX45862.1"/>
    <property type="molecule type" value="Genomic_DNA"/>
</dbReference>
<dbReference type="RefSeq" id="YP_636566.1">
    <property type="nucleotide sequence ID" value="NC_008117.1"/>
</dbReference>
<dbReference type="SMR" id="Q32RG0"/>
<dbReference type="GeneID" id="4108182"/>
<dbReference type="GO" id="GO:0009507">
    <property type="term" value="C:chloroplast"/>
    <property type="evidence" value="ECO:0007669"/>
    <property type="project" value="UniProtKB-SubCell"/>
</dbReference>
<dbReference type="GO" id="GO:0000428">
    <property type="term" value="C:DNA-directed RNA polymerase complex"/>
    <property type="evidence" value="ECO:0007669"/>
    <property type="project" value="UniProtKB-KW"/>
</dbReference>
<dbReference type="GO" id="GO:0005739">
    <property type="term" value="C:mitochondrion"/>
    <property type="evidence" value="ECO:0007669"/>
    <property type="project" value="GOC"/>
</dbReference>
<dbReference type="GO" id="GO:0003677">
    <property type="term" value="F:DNA binding"/>
    <property type="evidence" value="ECO:0007669"/>
    <property type="project" value="UniProtKB-UniRule"/>
</dbReference>
<dbReference type="GO" id="GO:0003899">
    <property type="term" value="F:DNA-directed RNA polymerase activity"/>
    <property type="evidence" value="ECO:0007669"/>
    <property type="project" value="UniProtKB-UniRule"/>
</dbReference>
<dbReference type="GO" id="GO:0032549">
    <property type="term" value="F:ribonucleoside binding"/>
    <property type="evidence" value="ECO:0007669"/>
    <property type="project" value="InterPro"/>
</dbReference>
<dbReference type="GO" id="GO:0006351">
    <property type="term" value="P:DNA-templated transcription"/>
    <property type="evidence" value="ECO:0007669"/>
    <property type="project" value="UniProtKB-UniRule"/>
</dbReference>
<dbReference type="CDD" id="cd00653">
    <property type="entry name" value="RNA_pol_B_RPB2"/>
    <property type="match status" value="1"/>
</dbReference>
<dbReference type="Gene3D" id="2.40.50.100">
    <property type="match status" value="1"/>
</dbReference>
<dbReference type="Gene3D" id="2.40.50.150">
    <property type="match status" value="1"/>
</dbReference>
<dbReference type="Gene3D" id="3.90.1100.10">
    <property type="match status" value="1"/>
</dbReference>
<dbReference type="Gene3D" id="2.30.150.10">
    <property type="entry name" value="DNA-directed RNA polymerase, beta subunit, external 1 domain"/>
    <property type="match status" value="1"/>
</dbReference>
<dbReference type="Gene3D" id="2.40.270.10">
    <property type="entry name" value="DNA-directed RNA polymerase, subunit 2, domain 6"/>
    <property type="match status" value="1"/>
</dbReference>
<dbReference type="Gene3D" id="3.90.1800.10">
    <property type="entry name" value="RNA polymerase alpha subunit dimerisation domain"/>
    <property type="match status" value="1"/>
</dbReference>
<dbReference type="Gene3D" id="3.90.1110.10">
    <property type="entry name" value="RNA polymerase Rpb2, domain 2"/>
    <property type="match status" value="1"/>
</dbReference>
<dbReference type="HAMAP" id="MF_01321">
    <property type="entry name" value="RNApol_bact_RpoB"/>
    <property type="match status" value="1"/>
</dbReference>
<dbReference type="InterPro" id="IPR042107">
    <property type="entry name" value="DNA-dir_RNA_pol_bsu_ext_1_sf"/>
</dbReference>
<dbReference type="InterPro" id="IPR015712">
    <property type="entry name" value="DNA-dir_RNA_pol_su2"/>
</dbReference>
<dbReference type="InterPro" id="IPR007120">
    <property type="entry name" value="DNA-dir_RNAP_su2_dom"/>
</dbReference>
<dbReference type="InterPro" id="IPR037033">
    <property type="entry name" value="DNA-dir_RNAP_su2_hyb_sf"/>
</dbReference>
<dbReference type="InterPro" id="IPR010243">
    <property type="entry name" value="RNA_pol_bsu_bac"/>
</dbReference>
<dbReference type="InterPro" id="IPR007121">
    <property type="entry name" value="RNA_pol_bsu_CS"/>
</dbReference>
<dbReference type="InterPro" id="IPR007644">
    <property type="entry name" value="RNA_pol_bsu_protrusion"/>
</dbReference>
<dbReference type="InterPro" id="IPR007642">
    <property type="entry name" value="RNA_pol_Rpb2_2"/>
</dbReference>
<dbReference type="InterPro" id="IPR037034">
    <property type="entry name" value="RNA_pol_Rpb2_2_sf"/>
</dbReference>
<dbReference type="InterPro" id="IPR007645">
    <property type="entry name" value="RNA_pol_Rpb2_3"/>
</dbReference>
<dbReference type="InterPro" id="IPR007641">
    <property type="entry name" value="RNA_pol_Rpb2_7"/>
</dbReference>
<dbReference type="InterPro" id="IPR014724">
    <property type="entry name" value="RNA_pol_RPB2_OB-fold"/>
</dbReference>
<dbReference type="NCBIfam" id="NF001616">
    <property type="entry name" value="PRK00405.1"/>
    <property type="match status" value="1"/>
</dbReference>
<dbReference type="PANTHER" id="PTHR20856">
    <property type="entry name" value="DNA-DIRECTED RNA POLYMERASE I SUBUNIT 2"/>
    <property type="match status" value="1"/>
</dbReference>
<dbReference type="Pfam" id="PF04563">
    <property type="entry name" value="RNA_pol_Rpb2_1"/>
    <property type="match status" value="1"/>
</dbReference>
<dbReference type="Pfam" id="PF04561">
    <property type="entry name" value="RNA_pol_Rpb2_2"/>
    <property type="match status" value="1"/>
</dbReference>
<dbReference type="Pfam" id="PF04565">
    <property type="entry name" value="RNA_pol_Rpb2_3"/>
    <property type="match status" value="1"/>
</dbReference>
<dbReference type="Pfam" id="PF00562">
    <property type="entry name" value="RNA_pol_Rpb2_6"/>
    <property type="match status" value="1"/>
</dbReference>
<dbReference type="Pfam" id="PF04560">
    <property type="entry name" value="RNA_pol_Rpb2_7"/>
    <property type="match status" value="1"/>
</dbReference>
<dbReference type="SUPFAM" id="SSF64484">
    <property type="entry name" value="beta and beta-prime subunits of DNA dependent RNA-polymerase"/>
    <property type="match status" value="1"/>
</dbReference>
<dbReference type="PROSITE" id="PS01166">
    <property type="entry name" value="RNA_POL_BETA"/>
    <property type="match status" value="1"/>
</dbReference>
<accession>Q32RG0</accession>
<gene>
    <name evidence="1" type="primary">rpoB</name>
</gene>
<sequence length="1063" mass="119295">MLSINRNAGMFVLPDFKQIQIDSFRHFLTDLLRLELQRFGTIKHANQQLEFKLLGELYRLEIPKFNEREAVYQSATYSSNLYAPAYLVDKKRGIIQKQTVFLGSIPLMSARGTFVIRGVSRCIVSQLLRSPGIYYTLSVQGVYTATIICNSGKSFKLELDRQGCLWVRVGRNSKAPLLLLLIALGLEMRYIPPMIVQRTKKLNQLLLCVEDAKIDLCKRLKLKQKTTQIELGVTDPIYSLFLKPYELGRMGRLNLNKRLNLRVSEFEILLRSQDLIVASDYLVQVSNGIGSLDDIDDLKHKRVKWVSDLFCVQLNMALKKLNVAVHTNLNKMEARISRMSLKSVVSSNAIATTFFRFVASYQLSQFLDQTNPLSEIVHKRKLSLLGPGGLTPRTARFRVRDIHPSQYGRICPVQTAEGQNAGVVNSFTICAHIGDNGAIKTSLYKVCTNSMQGHVIDMLPGEDEYSTIATESCLVVANSSNQFQSIPAQHRREFVTLRWDEIGFRNTLPVHSFSVGVVLIPFLEHDDATRALMGSNMQRQAVPLLKLERPIVGTGIESQVALDSGTVITAVQECKIHNVDATQIAYVPKDSFELLYINLLNYERSNNATCLHQRPIVECGETVQKGQLIADGSATVDGELALGKNVLVAYMPWEGYNFEDAVLINERLIYEDVYTSLHIERYEAEARETNQAIETITKQIPHLNAHVLRHLDETGVVSLGAWVETGDVLVGKLTAKQSEGLLHTPESKLLQDILGVQAFGTQDTCLKVPTRGEGRVIDVRWITRDNHLLGHRKVIHVYILQERKIQVGDKVAGRHGNKGVVSRILPRQDMPYLQDGTPVDMVLSPLGVPSRMNVGQVFECLLGLAGGYLNQHYRIMPFDERYGRESSRKLVFSELYKASQTTNYPWIFEPDSPGKSRLFDGRTGEVFNQPVTVGRAYMFKLIHQVDDKIHARSTGPYALVTQQPVRGRSRQGGQRVGEMEVWAFQGFGAACVLQELLTTKSDHATARAEAPNAIVTGNLVPKPIGTSDCLGVLIRELQCLGIQLDHTMLSQHNMIQYPNLNEE</sequence>
<feature type="chain" id="PRO_0000224135" description="DNA-directed RNA polymerase subunit beta">
    <location>
        <begin position="1"/>
        <end position="1063"/>
    </location>
</feature>
<keyword id="KW-0150">Chloroplast</keyword>
<keyword id="KW-0240">DNA-directed RNA polymerase</keyword>
<keyword id="KW-0548">Nucleotidyltransferase</keyword>
<keyword id="KW-0934">Plastid</keyword>
<keyword id="KW-0804">Transcription</keyword>
<keyword id="KW-0808">Transferase</keyword>
<evidence type="ECO:0000255" key="1">
    <source>
        <dbReference type="HAMAP-Rule" id="MF_01321"/>
    </source>
</evidence>
<organism>
    <name type="scientific">Zygnema circumcarinatum</name>
    <name type="common">Green alga</name>
    <dbReference type="NCBI Taxonomy" id="35869"/>
    <lineage>
        <taxon>Eukaryota</taxon>
        <taxon>Viridiplantae</taxon>
        <taxon>Streptophyta</taxon>
        <taxon>Zygnematophyceae</taxon>
        <taxon>Zygnematophycidae</taxon>
        <taxon>Zygnematales</taxon>
        <taxon>Zygnemataceae</taxon>
        <taxon>Zygnema</taxon>
    </lineage>
</organism>
<protein>
    <recommendedName>
        <fullName evidence="1">DNA-directed RNA polymerase subunit beta</fullName>
        <ecNumber evidence="1">2.7.7.6</ecNumber>
    </recommendedName>
    <alternativeName>
        <fullName evidence="1">PEP</fullName>
    </alternativeName>
    <alternativeName>
        <fullName evidence="1">Plastid-encoded RNA polymerase subunit beta</fullName>
        <shortName evidence="1">RNA polymerase subunit beta</shortName>
    </alternativeName>
</protein>
<name>RPOB_ZYGCR</name>
<proteinExistence type="inferred from homology"/>
<reference key="1">
    <citation type="journal article" date="2005" name="BMC Biol.">
        <title>The complete chloroplast DNA sequences of the charophycean green algae Staurastrum and Zygnema reveal that the chloroplast genome underwent extensive changes during the evolution of the Zygnematales.</title>
        <authorList>
            <person name="Turmel M."/>
            <person name="Otis C."/>
            <person name="Lemieux C."/>
        </authorList>
    </citation>
    <scope>NUCLEOTIDE SEQUENCE [LARGE SCALE GENOMIC DNA]</scope>
</reference>
<comment type="function">
    <text evidence="1">DNA-dependent RNA polymerase catalyzes the transcription of DNA into RNA using the four ribonucleoside triphosphates as substrates.</text>
</comment>
<comment type="catalytic activity">
    <reaction evidence="1">
        <text>RNA(n) + a ribonucleoside 5'-triphosphate = RNA(n+1) + diphosphate</text>
        <dbReference type="Rhea" id="RHEA:21248"/>
        <dbReference type="Rhea" id="RHEA-COMP:14527"/>
        <dbReference type="Rhea" id="RHEA-COMP:17342"/>
        <dbReference type="ChEBI" id="CHEBI:33019"/>
        <dbReference type="ChEBI" id="CHEBI:61557"/>
        <dbReference type="ChEBI" id="CHEBI:140395"/>
        <dbReference type="EC" id="2.7.7.6"/>
    </reaction>
</comment>
<comment type="subunit">
    <text evidence="1">In plastids the minimal PEP RNA polymerase catalytic core is composed of four subunits: alpha, beta, beta', and beta''. When a (nuclear-encoded) sigma factor is associated with the core the holoenzyme is formed, which can initiate transcription.</text>
</comment>
<comment type="subcellular location">
    <subcellularLocation>
        <location>Plastid</location>
        <location>Chloroplast</location>
    </subcellularLocation>
</comment>
<comment type="similarity">
    <text evidence="1">Belongs to the RNA polymerase beta chain family.</text>
</comment>